<feature type="chain" id="PRO_0000258669" description="Large ribosomal subunit protein bL35">
    <location>
        <begin position="1"/>
        <end position="67"/>
    </location>
</feature>
<comment type="similarity">
    <text evidence="1">Belongs to the bacterial ribosomal protein bL35 family.</text>
</comment>
<dbReference type="EMBL" id="CP000359">
    <property type="protein sequence ID" value="ABF44875.1"/>
    <property type="molecule type" value="Genomic_DNA"/>
</dbReference>
<dbReference type="RefSeq" id="WP_011529717.1">
    <property type="nucleotide sequence ID" value="NC_008025.1"/>
</dbReference>
<dbReference type="SMR" id="Q1J0V9"/>
<dbReference type="STRING" id="319795.Dgeo_0573"/>
<dbReference type="KEGG" id="dge:Dgeo_0573"/>
<dbReference type="eggNOG" id="COG0291">
    <property type="taxonomic scope" value="Bacteria"/>
</dbReference>
<dbReference type="HOGENOM" id="CLU_169643_2_2_0"/>
<dbReference type="Proteomes" id="UP000002431">
    <property type="component" value="Chromosome"/>
</dbReference>
<dbReference type="GO" id="GO:1990904">
    <property type="term" value="C:ribonucleoprotein complex"/>
    <property type="evidence" value="ECO:0007669"/>
    <property type="project" value="UniProtKB-KW"/>
</dbReference>
<dbReference type="GO" id="GO:0005840">
    <property type="term" value="C:ribosome"/>
    <property type="evidence" value="ECO:0007669"/>
    <property type="project" value="UniProtKB-KW"/>
</dbReference>
<dbReference type="GO" id="GO:0003735">
    <property type="term" value="F:structural constituent of ribosome"/>
    <property type="evidence" value="ECO:0007669"/>
    <property type="project" value="InterPro"/>
</dbReference>
<dbReference type="GO" id="GO:0006412">
    <property type="term" value="P:translation"/>
    <property type="evidence" value="ECO:0007669"/>
    <property type="project" value="UniProtKB-UniRule"/>
</dbReference>
<dbReference type="FunFam" id="4.10.410.60:FF:000001">
    <property type="entry name" value="50S ribosomal protein L35"/>
    <property type="match status" value="1"/>
</dbReference>
<dbReference type="Gene3D" id="4.10.410.60">
    <property type="match status" value="1"/>
</dbReference>
<dbReference type="HAMAP" id="MF_00514">
    <property type="entry name" value="Ribosomal_bL35"/>
    <property type="match status" value="1"/>
</dbReference>
<dbReference type="InterPro" id="IPR001706">
    <property type="entry name" value="Ribosomal_bL35"/>
</dbReference>
<dbReference type="InterPro" id="IPR021137">
    <property type="entry name" value="Ribosomal_bL35-like"/>
</dbReference>
<dbReference type="InterPro" id="IPR037229">
    <property type="entry name" value="Ribosomal_bL35_sf"/>
</dbReference>
<dbReference type="NCBIfam" id="TIGR00001">
    <property type="entry name" value="rpmI_bact"/>
    <property type="match status" value="1"/>
</dbReference>
<dbReference type="Pfam" id="PF01632">
    <property type="entry name" value="Ribosomal_L35p"/>
    <property type="match status" value="1"/>
</dbReference>
<dbReference type="SUPFAM" id="SSF143034">
    <property type="entry name" value="L35p-like"/>
    <property type="match status" value="1"/>
</dbReference>
<keyword id="KW-0687">Ribonucleoprotein</keyword>
<keyword id="KW-0689">Ribosomal protein</keyword>
<proteinExistence type="inferred from homology"/>
<reference key="1">
    <citation type="submission" date="2006-04" db="EMBL/GenBank/DDBJ databases">
        <title>Complete sequence of chromosome of Deinococcus geothermalis DSM 11300.</title>
        <authorList>
            <person name="Copeland A."/>
            <person name="Lucas S."/>
            <person name="Lapidus A."/>
            <person name="Barry K."/>
            <person name="Detter J.C."/>
            <person name="Glavina del Rio T."/>
            <person name="Hammon N."/>
            <person name="Israni S."/>
            <person name="Dalin E."/>
            <person name="Tice H."/>
            <person name="Pitluck S."/>
            <person name="Brettin T."/>
            <person name="Bruce D."/>
            <person name="Han C."/>
            <person name="Tapia R."/>
            <person name="Saunders E."/>
            <person name="Gilna P."/>
            <person name="Schmutz J."/>
            <person name="Larimer F."/>
            <person name="Land M."/>
            <person name="Hauser L."/>
            <person name="Kyrpides N."/>
            <person name="Kim E."/>
            <person name="Daly M.J."/>
            <person name="Fredrickson J.K."/>
            <person name="Makarova K.S."/>
            <person name="Gaidamakova E.K."/>
            <person name="Zhai M."/>
            <person name="Richardson P."/>
        </authorList>
    </citation>
    <scope>NUCLEOTIDE SEQUENCE [LARGE SCALE GENOMIC DNA]</scope>
    <source>
        <strain>DSM 11300 / CIP 105573 / AG-3a</strain>
    </source>
</reference>
<protein>
    <recommendedName>
        <fullName evidence="1">Large ribosomal subunit protein bL35</fullName>
    </recommendedName>
    <alternativeName>
        <fullName evidence="2">50S ribosomal protein L35</fullName>
    </alternativeName>
</protein>
<sequence>MPKMKTKKSMTRRVKVTATGKVMAFKSGKRHQNTGKSGDEIRGKGKGFVLAKSEWARMKLGLLAKGK</sequence>
<organism>
    <name type="scientific">Deinococcus geothermalis (strain DSM 11300 / CIP 105573 / AG-3a)</name>
    <dbReference type="NCBI Taxonomy" id="319795"/>
    <lineage>
        <taxon>Bacteria</taxon>
        <taxon>Thermotogati</taxon>
        <taxon>Deinococcota</taxon>
        <taxon>Deinococci</taxon>
        <taxon>Deinococcales</taxon>
        <taxon>Deinococcaceae</taxon>
        <taxon>Deinococcus</taxon>
    </lineage>
</organism>
<gene>
    <name evidence="1" type="primary">rpmI</name>
    <name type="ordered locus">Dgeo_0573</name>
</gene>
<evidence type="ECO:0000255" key="1">
    <source>
        <dbReference type="HAMAP-Rule" id="MF_00514"/>
    </source>
</evidence>
<evidence type="ECO:0000305" key="2"/>
<name>RL35_DEIGD</name>
<accession>Q1J0V9</accession>